<protein>
    <recommendedName>
        <fullName>DNA mismatch repair protein MutL</fullName>
    </recommendedName>
</protein>
<dbReference type="EMBL" id="Z11831">
    <property type="protein sequence ID" value="CAA77850.1"/>
    <property type="molecule type" value="Genomic_DNA"/>
</dbReference>
<dbReference type="EMBL" id="U14003">
    <property type="protein sequence ID" value="AAA97066.1"/>
    <property type="molecule type" value="Genomic_DNA"/>
</dbReference>
<dbReference type="EMBL" id="U00096">
    <property type="protein sequence ID" value="AAC77127.1"/>
    <property type="molecule type" value="Genomic_DNA"/>
</dbReference>
<dbReference type="EMBL" id="AP009048">
    <property type="protein sequence ID" value="BAE78171.1"/>
    <property type="molecule type" value="Genomic_DNA"/>
</dbReference>
<dbReference type="EMBL" id="M63655">
    <property type="protein sequence ID" value="AAA24173.1"/>
    <property type="molecule type" value="Genomic_DNA"/>
</dbReference>
<dbReference type="EMBL" id="L19346">
    <property type="protein sequence ID" value="AAA20098.1"/>
    <property type="molecule type" value="Unassigned_DNA"/>
</dbReference>
<dbReference type="PIR" id="PH0853">
    <property type="entry name" value="PH0853"/>
</dbReference>
<dbReference type="RefSeq" id="NP_418591.1">
    <property type="nucleotide sequence ID" value="NC_000913.3"/>
</dbReference>
<dbReference type="RefSeq" id="WP_001122505.1">
    <property type="nucleotide sequence ID" value="NZ_STEB01000013.1"/>
</dbReference>
<dbReference type="PDB" id="1B62">
    <property type="method" value="X-ray"/>
    <property type="resolution" value="2.10 A"/>
    <property type="chains" value="A=1-349"/>
</dbReference>
<dbReference type="PDB" id="1B63">
    <property type="method" value="X-ray"/>
    <property type="resolution" value="1.90 A"/>
    <property type="chains" value="A=1-331"/>
</dbReference>
<dbReference type="PDB" id="1BKN">
    <property type="method" value="X-ray"/>
    <property type="resolution" value="2.90 A"/>
    <property type="chains" value="A/B=1-349"/>
</dbReference>
<dbReference type="PDB" id="1NHH">
    <property type="method" value="X-ray"/>
    <property type="resolution" value="2.40 A"/>
    <property type="chains" value="A=1-331"/>
</dbReference>
<dbReference type="PDB" id="1NHI">
    <property type="method" value="X-ray"/>
    <property type="resolution" value="2.00 A"/>
    <property type="chains" value="A=1-331"/>
</dbReference>
<dbReference type="PDB" id="1NHJ">
    <property type="method" value="X-ray"/>
    <property type="resolution" value="2.30 A"/>
    <property type="chains" value="A=1-331"/>
</dbReference>
<dbReference type="PDB" id="1X9Z">
    <property type="method" value="X-ray"/>
    <property type="resolution" value="2.10 A"/>
    <property type="chains" value="A/B=432-615"/>
</dbReference>
<dbReference type="PDB" id="5AKB">
    <property type="method" value="X-ray"/>
    <property type="resolution" value="4.71 A"/>
    <property type="chains" value="C/D/F=1-349"/>
</dbReference>
<dbReference type="PDB" id="5AKC">
    <property type="method" value="X-ray"/>
    <property type="resolution" value="6.60 A"/>
    <property type="chains" value="C/D/G/H/K/L=1-349"/>
</dbReference>
<dbReference type="PDB" id="5AKD">
    <property type="method" value="X-ray"/>
    <property type="resolution" value="7.60 A"/>
    <property type="chains" value="C/D/G/H/K/L=1-349"/>
</dbReference>
<dbReference type="PDB" id="6E8E">
    <property type="method" value="X-ray"/>
    <property type="resolution" value="2.25 A"/>
    <property type="chains" value="A/B=466-569"/>
</dbReference>
<dbReference type="PDB" id="7AIB">
    <property type="method" value="EM"/>
    <property type="resolution" value="4.70 A"/>
    <property type="chains" value="C=1-331"/>
</dbReference>
<dbReference type="PDB" id="7AIC">
    <property type="method" value="EM"/>
    <property type="resolution" value="5.00 A"/>
    <property type="chains" value="C=1-331"/>
</dbReference>
<dbReference type="PDB" id="7P8V">
    <property type="method" value="EM"/>
    <property type="resolution" value="3.70 A"/>
    <property type="chains" value="A/B=1-615"/>
</dbReference>
<dbReference type="PDBsum" id="1B62"/>
<dbReference type="PDBsum" id="1B63"/>
<dbReference type="PDBsum" id="1BKN"/>
<dbReference type="PDBsum" id="1NHH"/>
<dbReference type="PDBsum" id="1NHI"/>
<dbReference type="PDBsum" id="1NHJ"/>
<dbReference type="PDBsum" id="1X9Z"/>
<dbReference type="PDBsum" id="5AKB"/>
<dbReference type="PDBsum" id="5AKC"/>
<dbReference type="PDBsum" id="5AKD"/>
<dbReference type="PDBsum" id="6E8E"/>
<dbReference type="PDBsum" id="7AIB"/>
<dbReference type="PDBsum" id="7AIC"/>
<dbReference type="PDBsum" id="7P8V"/>
<dbReference type="EMDB" id="EMD-11794"/>
<dbReference type="EMDB" id="EMD-11795"/>
<dbReference type="EMDB" id="EMD-13255"/>
<dbReference type="SMR" id="P23367"/>
<dbReference type="BioGRID" id="4263476">
    <property type="interactions" value="53"/>
</dbReference>
<dbReference type="BioGRID" id="852983">
    <property type="interactions" value="3"/>
</dbReference>
<dbReference type="ComplexPortal" id="CPX-5541">
    <property type="entry name" value="MutHLS methyl-directed mismatch repair complex"/>
</dbReference>
<dbReference type="ComplexPortal" id="CPX-5542">
    <property type="entry name" value="MutL-UvrD DNA helicase complex"/>
</dbReference>
<dbReference type="DIP" id="DIP-10285N"/>
<dbReference type="FunCoup" id="P23367">
    <property type="interactions" value="358"/>
</dbReference>
<dbReference type="IntAct" id="P23367">
    <property type="interactions" value="14"/>
</dbReference>
<dbReference type="STRING" id="511145.b4170"/>
<dbReference type="DrugBank" id="DB09462">
    <property type="generic name" value="Glycerin"/>
</dbReference>
<dbReference type="DrugBank" id="DB04395">
    <property type="generic name" value="Phosphoaminophosphonic Acid-Adenylate Ester"/>
</dbReference>
<dbReference type="jPOST" id="P23367"/>
<dbReference type="PaxDb" id="511145-b4170"/>
<dbReference type="EnsemblBacteria" id="AAC77127">
    <property type="protein sequence ID" value="AAC77127"/>
    <property type="gene ID" value="b4170"/>
</dbReference>
<dbReference type="GeneID" id="948691"/>
<dbReference type="KEGG" id="ecj:JW4128"/>
<dbReference type="KEGG" id="eco:b4170"/>
<dbReference type="KEGG" id="ecoc:C3026_22535"/>
<dbReference type="PATRIC" id="fig|1411691.4.peg.2531"/>
<dbReference type="EchoBASE" id="EB1258"/>
<dbReference type="eggNOG" id="COG0323">
    <property type="taxonomic scope" value="Bacteria"/>
</dbReference>
<dbReference type="HOGENOM" id="CLU_004131_5_1_6"/>
<dbReference type="InParanoid" id="P23367"/>
<dbReference type="OMA" id="ATQEQAW"/>
<dbReference type="OrthoDB" id="9763467at2"/>
<dbReference type="PhylomeDB" id="P23367"/>
<dbReference type="BioCyc" id="EcoCyc:EG11281-MONOMER"/>
<dbReference type="BioCyc" id="MetaCyc:EG11281-MONOMER"/>
<dbReference type="EvolutionaryTrace" id="P23367"/>
<dbReference type="PRO" id="PR:P23367"/>
<dbReference type="Proteomes" id="UP000000625">
    <property type="component" value="Chromosome"/>
</dbReference>
<dbReference type="GO" id="GO:0032300">
    <property type="term" value="C:mismatch repair complex"/>
    <property type="evidence" value="ECO:0000318"/>
    <property type="project" value="GO_Central"/>
</dbReference>
<dbReference type="GO" id="GO:0017117">
    <property type="term" value="C:single-stranded DNA-dependent ATP-dependent DNA helicase complex"/>
    <property type="evidence" value="ECO:0000353"/>
    <property type="project" value="ComplexPortal"/>
</dbReference>
<dbReference type="GO" id="GO:0005524">
    <property type="term" value="F:ATP binding"/>
    <property type="evidence" value="ECO:0000314"/>
    <property type="project" value="EcoliWiki"/>
</dbReference>
<dbReference type="GO" id="GO:0016887">
    <property type="term" value="F:ATP hydrolysis activity"/>
    <property type="evidence" value="ECO:0000314"/>
    <property type="project" value="EcoliWiki"/>
</dbReference>
<dbReference type="GO" id="GO:0140664">
    <property type="term" value="F:ATP-dependent DNA damage sensor activity"/>
    <property type="evidence" value="ECO:0007669"/>
    <property type="project" value="InterPro"/>
</dbReference>
<dbReference type="GO" id="GO:0003677">
    <property type="term" value="F:DNA binding"/>
    <property type="evidence" value="ECO:0000314"/>
    <property type="project" value="EcoliWiki"/>
</dbReference>
<dbReference type="GO" id="GO:0042802">
    <property type="term" value="F:identical protein binding"/>
    <property type="evidence" value="ECO:0000353"/>
    <property type="project" value="IntAct"/>
</dbReference>
<dbReference type="GO" id="GO:0030983">
    <property type="term" value="F:mismatched DNA binding"/>
    <property type="evidence" value="ECO:0007669"/>
    <property type="project" value="InterPro"/>
</dbReference>
<dbReference type="GO" id="GO:0006298">
    <property type="term" value="P:mismatch repair"/>
    <property type="evidence" value="ECO:0000314"/>
    <property type="project" value="EcoCyc"/>
</dbReference>
<dbReference type="GO" id="GO:0070716">
    <property type="term" value="P:mismatch repair involved in maintenance of fidelity involved in DNA-dependent DNA replication"/>
    <property type="evidence" value="ECO:0000314"/>
    <property type="project" value="ComplexPortal"/>
</dbReference>
<dbReference type="GO" id="GO:0000018">
    <property type="term" value="P:regulation of DNA recombination"/>
    <property type="evidence" value="ECO:0000315"/>
    <property type="project" value="EcoliWiki"/>
</dbReference>
<dbReference type="CDD" id="cd16926">
    <property type="entry name" value="HATPase_MutL-MLH-PMS-like"/>
    <property type="match status" value="1"/>
</dbReference>
<dbReference type="CDD" id="cd03482">
    <property type="entry name" value="MutL_Trans_MutL"/>
    <property type="match status" value="1"/>
</dbReference>
<dbReference type="FunFam" id="3.30.230.10:FF:000013">
    <property type="entry name" value="DNA mismatch repair endonuclease MutL"/>
    <property type="match status" value="1"/>
</dbReference>
<dbReference type="FunFam" id="3.30.565.10:FF:000003">
    <property type="entry name" value="DNA mismatch repair endonuclease MutL"/>
    <property type="match status" value="1"/>
</dbReference>
<dbReference type="FunFam" id="3.30.1370.100:FF:000002">
    <property type="entry name" value="DNA mismatch repair protein MutL"/>
    <property type="match status" value="1"/>
</dbReference>
<dbReference type="Gene3D" id="3.30.230.10">
    <property type="match status" value="1"/>
</dbReference>
<dbReference type="Gene3D" id="3.30.565.10">
    <property type="entry name" value="Histidine kinase-like ATPase, C-terminal domain"/>
    <property type="match status" value="1"/>
</dbReference>
<dbReference type="Gene3D" id="3.30.1540.20">
    <property type="entry name" value="MutL, C-terminal domain, dimerisation subdomain"/>
    <property type="match status" value="1"/>
</dbReference>
<dbReference type="Gene3D" id="3.30.1370.100">
    <property type="entry name" value="MutL, C-terminal domain, regulatory subdomain"/>
    <property type="match status" value="1"/>
</dbReference>
<dbReference type="HAMAP" id="MF_00149">
    <property type="entry name" value="DNA_mis_repair"/>
    <property type="match status" value="1"/>
</dbReference>
<dbReference type="InterPro" id="IPR014762">
    <property type="entry name" value="DNA_mismatch_repair_CS"/>
</dbReference>
<dbReference type="InterPro" id="IPR020667">
    <property type="entry name" value="DNA_mismatch_repair_MutL"/>
</dbReference>
<dbReference type="InterPro" id="IPR013507">
    <property type="entry name" value="DNA_mismatch_S5_2-like"/>
</dbReference>
<dbReference type="InterPro" id="IPR036890">
    <property type="entry name" value="HATPase_C_sf"/>
</dbReference>
<dbReference type="InterPro" id="IPR002099">
    <property type="entry name" value="MutL/Mlh/PMS"/>
</dbReference>
<dbReference type="InterPro" id="IPR038973">
    <property type="entry name" value="MutL/Mlh/Pms-like"/>
</dbReference>
<dbReference type="InterPro" id="IPR014790">
    <property type="entry name" value="MutL_C"/>
</dbReference>
<dbReference type="InterPro" id="IPR042120">
    <property type="entry name" value="MutL_C_dimsub"/>
</dbReference>
<dbReference type="InterPro" id="IPR042121">
    <property type="entry name" value="MutL_C_regsub"/>
</dbReference>
<dbReference type="InterPro" id="IPR037198">
    <property type="entry name" value="MutL_C_sf"/>
</dbReference>
<dbReference type="InterPro" id="IPR020568">
    <property type="entry name" value="Ribosomal_Su5_D2-typ_SF"/>
</dbReference>
<dbReference type="InterPro" id="IPR014721">
    <property type="entry name" value="Ribsml_uS5_D2-typ_fold_subgr"/>
</dbReference>
<dbReference type="NCBIfam" id="TIGR00585">
    <property type="entry name" value="mutl"/>
    <property type="match status" value="1"/>
</dbReference>
<dbReference type="NCBIfam" id="NF000948">
    <property type="entry name" value="PRK00095.1-1"/>
    <property type="match status" value="1"/>
</dbReference>
<dbReference type="PANTHER" id="PTHR10073">
    <property type="entry name" value="DNA MISMATCH REPAIR PROTEIN MLH, PMS, MUTL"/>
    <property type="match status" value="1"/>
</dbReference>
<dbReference type="PANTHER" id="PTHR10073:SF12">
    <property type="entry name" value="DNA MISMATCH REPAIR PROTEIN MLH1"/>
    <property type="match status" value="1"/>
</dbReference>
<dbReference type="Pfam" id="PF01119">
    <property type="entry name" value="DNA_mis_repair"/>
    <property type="match status" value="1"/>
</dbReference>
<dbReference type="Pfam" id="PF13589">
    <property type="entry name" value="HATPase_c_3"/>
    <property type="match status" value="1"/>
</dbReference>
<dbReference type="Pfam" id="PF08676">
    <property type="entry name" value="MutL_C"/>
    <property type="match status" value="1"/>
</dbReference>
<dbReference type="SMART" id="SM01340">
    <property type="entry name" value="DNA_mis_repair"/>
    <property type="match status" value="1"/>
</dbReference>
<dbReference type="SMART" id="SM00853">
    <property type="entry name" value="MutL_C"/>
    <property type="match status" value="1"/>
</dbReference>
<dbReference type="SUPFAM" id="SSF55874">
    <property type="entry name" value="ATPase domain of HSP90 chaperone/DNA topoisomerase II/histidine kinase"/>
    <property type="match status" value="1"/>
</dbReference>
<dbReference type="SUPFAM" id="SSF118116">
    <property type="entry name" value="DNA mismatch repair protein MutL"/>
    <property type="match status" value="1"/>
</dbReference>
<dbReference type="SUPFAM" id="SSF54211">
    <property type="entry name" value="Ribosomal protein S5 domain 2-like"/>
    <property type="match status" value="1"/>
</dbReference>
<dbReference type="PROSITE" id="PS00058">
    <property type="entry name" value="DNA_MISMATCH_REPAIR_1"/>
    <property type="match status" value="1"/>
</dbReference>
<sequence>MPIQVLPPQLANQIAAGEVVERPASVVKELVENSLDAGATRIDIDIERGGAKLIRIRDNGCGIKKDELALALARHATSKIASLDDLEAIISLGFRGEALASISSVSRLTLTSRTAEQQEAWQAYAEGRDMNVTVKPAAHPVGTTLEVLDLFYNTPARRKFLRTEKTEFNHIDEIIRRIALARFDVTINLSHNGKIVRQYRAVPEGGQKERRLGAICGTAFLEQALAIEWQHGDLTLRGWVADPNHTTPALAEIQYCYVNGRMMRDRLINHAIRQACEDKLGADQQPAFVLYLEIDPHQVDVNVHPAKHEVRFHQSRLVHDFIYQGVLSVLQQQLETPLPLDDEPQPAPRSIPENRVAAGRNHFAEPAAREPVAPRYTPAPASGSRPAAPWPNAQPGYQKQQGEVYRQLLQTPAPMQKLKAPEPQEPALAANSQSFGRVLTIVHSDCALLERDGNISLLSLPVAERWLRQAQLTPGEAPVCAQPLLIPLRLKVSAEEKSALEKAQSALAELGIDFQSDAQHVTIRAVPLPLRQQNLQILIPELIGYLAKQSVFEPGNIAQWIARNLMSEHAQWSMAQAITLLADVERLCPQLVKTPPGGLLQSVDLHPAIKALKDE</sequence>
<keyword id="KW-0002">3D-structure</keyword>
<keyword id="KW-0067">ATP-binding</keyword>
<keyword id="KW-0227">DNA damage</keyword>
<keyword id="KW-0234">DNA repair</keyword>
<keyword id="KW-0547">Nucleotide-binding</keyword>
<keyword id="KW-1185">Reference proteome</keyword>
<comment type="function">
    <text>This protein is involved in the repair of mismatches in DNA. It is required for dam-dependent methyl-directed DNA mismatch repair. May act as a 'molecular matchmaker', a protein that promotes the formation of a stable complex between two or more DNA-binding proteins in an ATP-dependent manner without itself being part of the final effector complex. The ATPase activity of MutL is stimulated by DNA.</text>
</comment>
<comment type="interaction">
    <interactant intactId="EBI-554913">
        <id>P23367</id>
    </interactant>
    <interactant intactId="EBI-2604194">
        <id>P06710-2</id>
        <label>dnaX</label>
    </interactant>
    <organismsDiffer>false</organismsDiffer>
    <experiments>2</experiments>
</comment>
<comment type="interaction">
    <interactant intactId="EBI-554913">
        <id>P23367</id>
    </interactant>
    <interactant intactId="EBI-549153">
        <id>P28630</id>
        <label>holA</label>
    </interactant>
    <organismsDiffer>false</organismsDiffer>
    <experiments>2</experiments>
</comment>
<comment type="interaction">
    <interactant intactId="EBI-554913">
        <id>P23367</id>
    </interactant>
    <interactant intactId="EBI-549161">
        <id>P28631</id>
        <label>holB</label>
    </interactant>
    <organismsDiffer>false</organismsDiffer>
    <experiments>2</experiments>
</comment>
<comment type="interaction">
    <interactant intactId="EBI-554913">
        <id>P23367</id>
    </interactant>
    <interactant intactId="EBI-545170">
        <id>P06722</id>
        <label>mutH</label>
    </interactant>
    <organismsDiffer>false</organismsDiffer>
    <experiments>8</experiments>
</comment>
<comment type="interaction">
    <interactant intactId="EBI-554913">
        <id>P23367</id>
    </interactant>
    <interactant intactId="EBI-554913">
        <id>P23367</id>
        <label>mutL</label>
    </interactant>
    <organismsDiffer>false</organismsDiffer>
    <experiments>4</experiments>
</comment>
<comment type="interaction">
    <interactant intactId="EBI-554913">
        <id>P23367</id>
    </interactant>
    <interactant intactId="EBI-554920">
        <id>P23909</id>
        <label>mutS</label>
    </interactant>
    <organismsDiffer>false</organismsDiffer>
    <experiments>4</experiments>
</comment>
<comment type="interaction">
    <interactant intactId="EBI-554913">
        <id>P23367</id>
    </interactant>
    <interactant intactId="EBI-370331">
        <id>P0A7G6</id>
        <label>recA</label>
    </interactant>
    <organismsDiffer>false</organismsDiffer>
    <experiments>3</experiments>
</comment>
<comment type="interaction">
    <interactant intactId="EBI-554913">
        <id>P23367</id>
    </interactant>
    <interactant intactId="EBI-559573">
        <id>P03018</id>
        <label>uvrD</label>
    </interactant>
    <organismsDiffer>false</organismsDiffer>
    <experiments>7</experiments>
</comment>
<comment type="interaction">
    <interactant intactId="EBI-554913">
        <id>P23367</id>
    </interactant>
    <interactant intactId="EBI-765033">
        <id>P09184</id>
        <label>vsr</label>
    </interactant>
    <organismsDiffer>false</organismsDiffer>
    <experiments>3</experiments>
</comment>
<comment type="similarity">
    <text evidence="2">Belongs to the DNA mismatch repair MutL/HexB family.</text>
</comment>
<feature type="chain" id="PRO_0000177943" description="DNA mismatch repair protein MutL">
    <location>
        <begin position="1"/>
        <end position="615"/>
    </location>
</feature>
<feature type="region of interest" description="Disordered" evidence="1">
    <location>
        <begin position="363"/>
        <end position="397"/>
    </location>
</feature>
<feature type="compositionally biased region" description="Low complexity" evidence="1">
    <location>
        <begin position="364"/>
        <end position="391"/>
    </location>
</feature>
<feature type="helix" evidence="3">
    <location>
        <begin position="8"/>
        <end position="19"/>
    </location>
</feature>
<feature type="helix" evidence="3">
    <location>
        <begin position="23"/>
        <end position="36"/>
    </location>
</feature>
<feature type="strand" evidence="3">
    <location>
        <begin position="40"/>
        <end position="47"/>
    </location>
</feature>
<feature type="helix" evidence="3">
    <location>
        <begin position="48"/>
        <end position="50"/>
    </location>
</feature>
<feature type="strand" evidence="3">
    <location>
        <begin position="52"/>
        <end position="58"/>
    </location>
</feature>
<feature type="helix" evidence="3">
    <location>
        <begin position="65"/>
        <end position="67"/>
    </location>
</feature>
<feature type="helix" evidence="3">
    <location>
        <begin position="68"/>
        <end position="72"/>
    </location>
</feature>
<feature type="helix" evidence="3">
    <location>
        <begin position="83"/>
        <end position="87"/>
    </location>
</feature>
<feature type="helix" evidence="4">
    <location>
        <begin position="90"/>
        <end position="92"/>
    </location>
</feature>
<feature type="helix" evidence="3">
    <location>
        <begin position="98"/>
        <end position="103"/>
    </location>
</feature>
<feature type="strand" evidence="3">
    <location>
        <begin position="106"/>
        <end position="113"/>
    </location>
</feature>
<feature type="strand" evidence="4">
    <location>
        <begin position="115"/>
        <end position="117"/>
    </location>
</feature>
<feature type="strand" evidence="3">
    <location>
        <begin position="118"/>
        <end position="126"/>
    </location>
</feature>
<feature type="turn" evidence="3">
    <location>
        <begin position="127"/>
        <end position="130"/>
    </location>
</feature>
<feature type="strand" evidence="3">
    <location>
        <begin position="131"/>
        <end position="137"/>
    </location>
</feature>
<feature type="strand" evidence="3">
    <location>
        <begin position="141"/>
        <end position="149"/>
    </location>
</feature>
<feature type="turn" evidence="3">
    <location>
        <begin position="150"/>
        <end position="153"/>
    </location>
</feature>
<feature type="helix" evidence="3">
    <location>
        <begin position="155"/>
        <end position="159"/>
    </location>
</feature>
<feature type="helix" evidence="3">
    <location>
        <begin position="164"/>
        <end position="181"/>
    </location>
</feature>
<feature type="strand" evidence="3">
    <location>
        <begin position="186"/>
        <end position="191"/>
    </location>
</feature>
<feature type="strand" evidence="3">
    <location>
        <begin position="194"/>
        <end position="199"/>
    </location>
</feature>
<feature type="helix" evidence="3">
    <location>
        <begin position="209"/>
        <end position="216"/>
    </location>
</feature>
<feature type="helix" evidence="3">
    <location>
        <begin position="218"/>
        <end position="223"/>
    </location>
</feature>
<feature type="strand" evidence="3">
    <location>
        <begin position="224"/>
        <end position="231"/>
    </location>
</feature>
<feature type="strand" evidence="3">
    <location>
        <begin position="234"/>
        <end position="241"/>
    </location>
</feature>
<feature type="helix" evidence="3">
    <location>
        <begin position="243"/>
        <end position="245"/>
    </location>
</feature>
<feature type="helix" evidence="3">
    <location>
        <begin position="250"/>
        <end position="252"/>
    </location>
</feature>
<feature type="strand" evidence="3">
    <location>
        <begin position="254"/>
        <end position="258"/>
    </location>
</feature>
<feature type="strand" evidence="5">
    <location>
        <begin position="261"/>
        <end position="263"/>
    </location>
</feature>
<feature type="helix" evidence="3">
    <location>
        <begin position="266"/>
        <end position="279"/>
    </location>
</feature>
<feature type="strand" evidence="3">
    <location>
        <begin position="280"/>
        <end position="282"/>
    </location>
</feature>
<feature type="strand" evidence="3">
    <location>
        <begin position="288"/>
        <end position="293"/>
    </location>
</feature>
<feature type="helix" evidence="3">
    <location>
        <begin position="296"/>
        <end position="298"/>
    </location>
</feature>
<feature type="strand" evidence="6">
    <location>
        <begin position="311"/>
        <end position="314"/>
    </location>
</feature>
<feature type="helix" evidence="3">
    <location>
        <begin position="315"/>
        <end position="329"/>
    </location>
</feature>
<feature type="strand" evidence="7">
    <location>
        <begin position="437"/>
        <end position="442"/>
    </location>
</feature>
<feature type="turn" evidence="7">
    <location>
        <begin position="443"/>
        <end position="445"/>
    </location>
</feature>
<feature type="strand" evidence="7">
    <location>
        <begin position="446"/>
        <end position="451"/>
    </location>
</feature>
<feature type="strand" evidence="7">
    <location>
        <begin position="454"/>
        <end position="459"/>
    </location>
</feature>
<feature type="helix" evidence="7">
    <location>
        <begin position="460"/>
        <end position="472"/>
    </location>
</feature>
<feature type="strand" evidence="7">
    <location>
        <begin position="481"/>
        <end position="491"/>
    </location>
</feature>
<feature type="helix" evidence="7">
    <location>
        <begin position="494"/>
        <end position="509"/>
    </location>
</feature>
<feature type="strand" evidence="7">
    <location>
        <begin position="513"/>
        <end position="516"/>
    </location>
</feature>
<feature type="strand" evidence="7">
    <location>
        <begin position="518"/>
        <end position="527"/>
    </location>
</feature>
<feature type="helix" evidence="7">
    <location>
        <begin position="528"/>
        <end position="530"/>
    </location>
</feature>
<feature type="helix" evidence="7">
    <location>
        <begin position="535"/>
        <end position="546"/>
    </location>
</feature>
<feature type="helix" evidence="7">
    <location>
        <begin position="554"/>
        <end position="563"/>
    </location>
</feature>
<feature type="helix" evidence="7">
    <location>
        <begin position="574"/>
        <end position="587"/>
    </location>
</feature>
<feature type="helix" evidence="7">
    <location>
        <begin position="589"/>
        <end position="593"/>
    </location>
</feature>
<feature type="turn" evidence="7">
    <location>
        <begin position="597"/>
        <end position="599"/>
    </location>
</feature>
<feature type="strand" evidence="7">
    <location>
        <begin position="600"/>
        <end position="602"/>
    </location>
</feature>
<feature type="helix" evidence="7">
    <location>
        <begin position="606"/>
        <end position="613"/>
    </location>
</feature>
<accession>P23367</accession>
<accession>Q2M6D5</accession>
<gene>
    <name type="primary">mutL</name>
    <name type="ordered locus">b4170</name>
    <name type="ordered locus">JW4128</name>
</gene>
<organism>
    <name type="scientific">Escherichia coli (strain K12)</name>
    <dbReference type="NCBI Taxonomy" id="83333"/>
    <lineage>
        <taxon>Bacteria</taxon>
        <taxon>Pseudomonadati</taxon>
        <taxon>Pseudomonadota</taxon>
        <taxon>Gammaproteobacteria</taxon>
        <taxon>Enterobacterales</taxon>
        <taxon>Enterobacteriaceae</taxon>
        <taxon>Escherichia</taxon>
    </lineage>
</organism>
<proteinExistence type="evidence at protein level"/>
<evidence type="ECO:0000256" key="1">
    <source>
        <dbReference type="SAM" id="MobiDB-lite"/>
    </source>
</evidence>
<evidence type="ECO:0000305" key="2"/>
<evidence type="ECO:0007829" key="3">
    <source>
        <dbReference type="PDB" id="1B63"/>
    </source>
</evidence>
<evidence type="ECO:0007829" key="4">
    <source>
        <dbReference type="PDB" id="1BKN"/>
    </source>
</evidence>
<evidence type="ECO:0007829" key="5">
    <source>
        <dbReference type="PDB" id="1NHI"/>
    </source>
</evidence>
<evidence type="ECO:0007829" key="6">
    <source>
        <dbReference type="PDB" id="1NHJ"/>
    </source>
</evidence>
<evidence type="ECO:0007829" key="7">
    <source>
        <dbReference type="PDB" id="1X9Z"/>
    </source>
</evidence>
<name>MUTL_ECOLI</name>
<reference key="1">
    <citation type="journal article" date="1992" name="Nucleic Acids Res.">
        <title>Nonconserved segment of the MutL protein from Escherichia coli K-12 and Salmonella typhimurium.</title>
        <authorList>
            <person name="Tsui H.-C.T."/>
            <person name="Mandavilli B.S."/>
            <person name="Winkler M.E."/>
        </authorList>
    </citation>
    <scope>NUCLEOTIDE SEQUENCE [GENOMIC DNA]</scope>
    <source>
        <strain>K12</strain>
    </source>
</reference>
<reference key="2">
    <citation type="journal article" date="1995" name="Nucleic Acids Res.">
        <title>Analysis of the Escherichia coli genome VI: DNA sequence of the region from 92.8 through 100 minutes.</title>
        <authorList>
            <person name="Burland V.D."/>
            <person name="Plunkett G. III"/>
            <person name="Sofia H.J."/>
            <person name="Daniels D.L."/>
            <person name="Blattner F.R."/>
        </authorList>
    </citation>
    <scope>NUCLEOTIDE SEQUENCE [LARGE SCALE GENOMIC DNA]</scope>
    <source>
        <strain>K12 / MG1655 / ATCC 47076</strain>
    </source>
</reference>
<reference key="3">
    <citation type="journal article" date="1997" name="Science">
        <title>The complete genome sequence of Escherichia coli K-12.</title>
        <authorList>
            <person name="Blattner F.R."/>
            <person name="Plunkett G. III"/>
            <person name="Bloch C.A."/>
            <person name="Perna N.T."/>
            <person name="Burland V."/>
            <person name="Riley M."/>
            <person name="Collado-Vides J."/>
            <person name="Glasner J.D."/>
            <person name="Rode C.K."/>
            <person name="Mayhew G.F."/>
            <person name="Gregor J."/>
            <person name="Davis N.W."/>
            <person name="Kirkpatrick H.A."/>
            <person name="Goeden M.A."/>
            <person name="Rose D.J."/>
            <person name="Mau B."/>
            <person name="Shao Y."/>
        </authorList>
    </citation>
    <scope>NUCLEOTIDE SEQUENCE [LARGE SCALE GENOMIC DNA]</scope>
    <source>
        <strain>K12 / MG1655 / ATCC 47076</strain>
    </source>
</reference>
<reference key="4">
    <citation type="journal article" date="2006" name="Mol. Syst. Biol.">
        <title>Highly accurate genome sequences of Escherichia coli K-12 strains MG1655 and W3110.</title>
        <authorList>
            <person name="Hayashi K."/>
            <person name="Morooka N."/>
            <person name="Yamamoto Y."/>
            <person name="Fujita K."/>
            <person name="Isono K."/>
            <person name="Choi S."/>
            <person name="Ohtsubo E."/>
            <person name="Baba T."/>
            <person name="Wanner B.L."/>
            <person name="Mori H."/>
            <person name="Horiuchi T."/>
        </authorList>
    </citation>
    <scope>NUCLEOTIDE SEQUENCE [LARGE SCALE GENOMIC DNA]</scope>
    <source>
        <strain>K12 / W3110 / ATCC 27325 / DSM 5911</strain>
    </source>
</reference>
<reference key="5">
    <citation type="journal article" date="1991" name="J. Bacteriol.">
        <title>Structure of Escherichia coli K-12 miaA and characterization of the mutator phenotype caused by miaA insertion mutations.</title>
        <authorList>
            <person name="Winkler M.E."/>
            <person name="Connolly D.M."/>
        </authorList>
    </citation>
    <scope>NUCLEOTIDE SEQUENCE [GENOMIC DNA] OF 596-615</scope>
    <source>
        <strain>K12</strain>
    </source>
</reference>
<reference key="6">
    <citation type="journal article" date="1994" name="Mol. Microbiol.">
        <title>The mutL repair gene of Escherichia coli K-12 forms a superoperon with a gene encoding a new cell-wall amidase.</title>
        <authorList>
            <person name="Tsui H.-C.T."/>
            <person name="Zhao G."/>
            <person name="Feng G."/>
            <person name="Leung H.-C.E."/>
            <person name="Winkler M.E."/>
        </authorList>
    </citation>
    <scope>NUCLEOTIDE SEQUENCE [GENOMIC DNA] OF 1-23</scope>
    <source>
        <strain>K12</strain>
    </source>
</reference>
<reference key="7">
    <citation type="journal article" date="1998" name="Cell">
        <title>Crystal structure and ATPase activity of MutL: implications for DNA repair and mutagenesis.</title>
        <authorList>
            <person name="Ban C."/>
            <person name="Yang W."/>
        </authorList>
    </citation>
    <scope>X-RAY CRYSTALLOGRAPHY (2.9 ANGSTROMS) OF 1-349</scope>
</reference>
<reference key="8">
    <citation type="journal article" date="1999" name="Cell">
        <title>Transformation of MutL by ATP binding and hydrolysis: a switch in DNA mismatch repair.</title>
        <authorList>
            <person name="Ban C."/>
            <person name="Junop M."/>
            <person name="Yang W."/>
        </authorList>
    </citation>
    <scope>X-RAY CRYSTALLOGRAPHY (2.1 ANGSTROMS) OF 1-349</scope>
    <source>
        <strain>K12</strain>
    </source>
</reference>